<organism>
    <name type="scientific">Syntrophomonas wolfei subsp. wolfei (strain DSM 2245B / Goettingen)</name>
    <dbReference type="NCBI Taxonomy" id="335541"/>
    <lineage>
        <taxon>Bacteria</taxon>
        <taxon>Bacillati</taxon>
        <taxon>Bacillota</taxon>
        <taxon>Clostridia</taxon>
        <taxon>Eubacteriales</taxon>
        <taxon>Syntrophomonadaceae</taxon>
        <taxon>Syntrophomonas</taxon>
    </lineage>
</organism>
<sequence>MAKGKYDGTLNLPQTGFPMRANLPQREPEILKFWDEIDIYRRIQEKNAGRPQFILHDGPPYANGNIHLGHTLNKVLKDIIVKYRSMSGYDSPYIPGWDTHGLPIEQQAIKNLGIDRHKTDVVEFREHCRDYALKYVEIQKEQFKRLGVRGDWEDPYLTLSPGFESIQIKVFGEMAKKGFIYKGLKPVYWCGDCETALAEAEVEYNEKVSPSIYVKFPVKDGKGVLPEDAFVIIWTTTPWTLPANTGICLHPGFDYVLLEVKGEKYLLAQGLLEAVAGELGWDNYQILDKYKGEELERVICHHPFFARDSLLVLGEHVTLEAGTGCVHTAPGHGEDDFHVGQEYGLEVISPVDDRGRFTAEAEKFQGLYVHDANKAVIEELEKRNMLLKAASIEHQYPYCWRCKQPIIYRATEQWFASIDGFRQDALNAIDTVKWIPSWGRDRIFNMIRDRGDWCISRQRTWGVPIPIFYCESCGEALINDETIQRVSELFAANGSDIWFAKTAAELMPPGCSCEHCGGSTFRKESDIMDVWFDSGSSHMAVLEPRQELRWPSDMYLEGSDQHRGWFNSSLSTAVAIRGAAPYREVLTHGFVVDEQGRKMSKSLGNVVDPLRMTREMGADILRLWVSSADYRNDVSVSPNIIKQSAEAYRKIRNTCRFILGNLFDFDPGKERVSYDKLSELDQWALLKLDKLIRRVTKAYEDYEFHVVFHSMHNFCTVDLSNIYFDILKDKLYCSHPQDAERKAAQTVLYDIINALVVMLTPILAFSSEEIWSYLKKEGQAESVQLLEWPQANDEYLNQAIENRMSRVLELREVVTKALEEARSKKVIGHSLGAWITIYASPEWTELLKATAGLEKIFIVSRAELKPETEAPAEALALEGVEGIRVMVQAAEGSKCERCWIIENSVGEDLKHPTLCQRCAEVVAQLQG</sequence>
<dbReference type="EC" id="6.1.1.5" evidence="1"/>
<dbReference type="EMBL" id="CP000448">
    <property type="protein sequence ID" value="ABI68277.1"/>
    <property type="molecule type" value="Genomic_DNA"/>
</dbReference>
<dbReference type="RefSeq" id="WP_011640382.1">
    <property type="nucleotide sequence ID" value="NC_008346.1"/>
</dbReference>
<dbReference type="SMR" id="Q0AYC7"/>
<dbReference type="STRING" id="335541.Swol_0962"/>
<dbReference type="KEGG" id="swo:Swol_0962"/>
<dbReference type="eggNOG" id="COG0060">
    <property type="taxonomic scope" value="Bacteria"/>
</dbReference>
<dbReference type="HOGENOM" id="CLU_001493_7_0_9"/>
<dbReference type="OrthoDB" id="9810365at2"/>
<dbReference type="Proteomes" id="UP000001968">
    <property type="component" value="Chromosome"/>
</dbReference>
<dbReference type="GO" id="GO:0005829">
    <property type="term" value="C:cytosol"/>
    <property type="evidence" value="ECO:0007669"/>
    <property type="project" value="TreeGrafter"/>
</dbReference>
<dbReference type="GO" id="GO:0002161">
    <property type="term" value="F:aminoacyl-tRNA deacylase activity"/>
    <property type="evidence" value="ECO:0007669"/>
    <property type="project" value="InterPro"/>
</dbReference>
<dbReference type="GO" id="GO:0005524">
    <property type="term" value="F:ATP binding"/>
    <property type="evidence" value="ECO:0007669"/>
    <property type="project" value="UniProtKB-UniRule"/>
</dbReference>
<dbReference type="GO" id="GO:0004822">
    <property type="term" value="F:isoleucine-tRNA ligase activity"/>
    <property type="evidence" value="ECO:0007669"/>
    <property type="project" value="UniProtKB-UniRule"/>
</dbReference>
<dbReference type="GO" id="GO:0000049">
    <property type="term" value="F:tRNA binding"/>
    <property type="evidence" value="ECO:0007669"/>
    <property type="project" value="InterPro"/>
</dbReference>
<dbReference type="GO" id="GO:0008270">
    <property type="term" value="F:zinc ion binding"/>
    <property type="evidence" value="ECO:0007669"/>
    <property type="project" value="UniProtKB-UniRule"/>
</dbReference>
<dbReference type="GO" id="GO:0006428">
    <property type="term" value="P:isoleucyl-tRNA aminoacylation"/>
    <property type="evidence" value="ECO:0007669"/>
    <property type="project" value="UniProtKB-UniRule"/>
</dbReference>
<dbReference type="CDD" id="cd07960">
    <property type="entry name" value="Anticodon_Ia_Ile_BEm"/>
    <property type="match status" value="1"/>
</dbReference>
<dbReference type="CDD" id="cd00818">
    <property type="entry name" value="IleRS_core"/>
    <property type="match status" value="1"/>
</dbReference>
<dbReference type="FunFam" id="1.10.730.20:FF:000001">
    <property type="entry name" value="Isoleucine--tRNA ligase"/>
    <property type="match status" value="1"/>
</dbReference>
<dbReference type="FunFam" id="3.40.50.620:FF:000152">
    <property type="entry name" value="Isoleucine--tRNA ligase"/>
    <property type="match status" value="1"/>
</dbReference>
<dbReference type="FunFam" id="3.90.740.10:FF:000006">
    <property type="entry name" value="Isoleucine--tRNA ligase"/>
    <property type="match status" value="1"/>
</dbReference>
<dbReference type="Gene3D" id="1.10.730.20">
    <property type="match status" value="1"/>
</dbReference>
<dbReference type="Gene3D" id="2.170.220.10">
    <property type="match status" value="1"/>
</dbReference>
<dbReference type="Gene3D" id="3.40.50.620">
    <property type="entry name" value="HUPs"/>
    <property type="match status" value="2"/>
</dbReference>
<dbReference type="Gene3D" id="1.10.10.830">
    <property type="entry name" value="Ile-tRNA synthetase CP2 domain-like"/>
    <property type="match status" value="1"/>
</dbReference>
<dbReference type="Gene3D" id="3.90.740.10">
    <property type="entry name" value="Valyl/Leucyl/Isoleucyl-tRNA synthetase, editing domain"/>
    <property type="match status" value="1"/>
</dbReference>
<dbReference type="HAMAP" id="MF_02002">
    <property type="entry name" value="Ile_tRNA_synth_type1"/>
    <property type="match status" value="1"/>
</dbReference>
<dbReference type="InterPro" id="IPR001412">
    <property type="entry name" value="aa-tRNA-synth_I_CS"/>
</dbReference>
<dbReference type="InterPro" id="IPR002300">
    <property type="entry name" value="aa-tRNA-synth_Ia"/>
</dbReference>
<dbReference type="InterPro" id="IPR033708">
    <property type="entry name" value="Anticodon_Ile_BEm"/>
</dbReference>
<dbReference type="InterPro" id="IPR002301">
    <property type="entry name" value="Ile-tRNA-ligase"/>
</dbReference>
<dbReference type="InterPro" id="IPR023585">
    <property type="entry name" value="Ile-tRNA-ligase_type1"/>
</dbReference>
<dbReference type="InterPro" id="IPR050081">
    <property type="entry name" value="Ile-tRNA_ligase"/>
</dbReference>
<dbReference type="InterPro" id="IPR013155">
    <property type="entry name" value="M/V/L/I-tRNA-synth_anticd-bd"/>
</dbReference>
<dbReference type="InterPro" id="IPR014729">
    <property type="entry name" value="Rossmann-like_a/b/a_fold"/>
</dbReference>
<dbReference type="InterPro" id="IPR009080">
    <property type="entry name" value="tRNAsynth_Ia_anticodon-bd"/>
</dbReference>
<dbReference type="InterPro" id="IPR009008">
    <property type="entry name" value="Val/Leu/Ile-tRNA-synth_edit"/>
</dbReference>
<dbReference type="InterPro" id="IPR010663">
    <property type="entry name" value="Znf_FPG/IleRS"/>
</dbReference>
<dbReference type="NCBIfam" id="TIGR00392">
    <property type="entry name" value="ileS"/>
    <property type="match status" value="1"/>
</dbReference>
<dbReference type="PANTHER" id="PTHR42765:SF1">
    <property type="entry name" value="ISOLEUCINE--TRNA LIGASE, MITOCHONDRIAL"/>
    <property type="match status" value="1"/>
</dbReference>
<dbReference type="PANTHER" id="PTHR42765">
    <property type="entry name" value="SOLEUCYL-TRNA SYNTHETASE"/>
    <property type="match status" value="1"/>
</dbReference>
<dbReference type="Pfam" id="PF08264">
    <property type="entry name" value="Anticodon_1"/>
    <property type="match status" value="1"/>
</dbReference>
<dbReference type="Pfam" id="PF00133">
    <property type="entry name" value="tRNA-synt_1"/>
    <property type="match status" value="1"/>
</dbReference>
<dbReference type="Pfam" id="PF06827">
    <property type="entry name" value="zf-FPG_IleRS"/>
    <property type="match status" value="1"/>
</dbReference>
<dbReference type="PRINTS" id="PR00984">
    <property type="entry name" value="TRNASYNTHILE"/>
</dbReference>
<dbReference type="SUPFAM" id="SSF47323">
    <property type="entry name" value="Anticodon-binding domain of a subclass of class I aminoacyl-tRNA synthetases"/>
    <property type="match status" value="1"/>
</dbReference>
<dbReference type="SUPFAM" id="SSF52374">
    <property type="entry name" value="Nucleotidylyl transferase"/>
    <property type="match status" value="1"/>
</dbReference>
<dbReference type="SUPFAM" id="SSF50677">
    <property type="entry name" value="ValRS/IleRS/LeuRS editing domain"/>
    <property type="match status" value="1"/>
</dbReference>
<dbReference type="PROSITE" id="PS00178">
    <property type="entry name" value="AA_TRNA_LIGASE_I"/>
    <property type="match status" value="1"/>
</dbReference>
<protein>
    <recommendedName>
        <fullName evidence="1">Isoleucine--tRNA ligase</fullName>
        <ecNumber evidence="1">6.1.1.5</ecNumber>
    </recommendedName>
    <alternativeName>
        <fullName evidence="1">Isoleucyl-tRNA synthetase</fullName>
        <shortName evidence="1">IleRS</shortName>
    </alternativeName>
</protein>
<comment type="function">
    <text evidence="1">Catalyzes the attachment of isoleucine to tRNA(Ile). As IleRS can inadvertently accommodate and process structurally similar amino acids such as valine, to avoid such errors it has two additional distinct tRNA(Ile)-dependent editing activities. One activity is designated as 'pretransfer' editing and involves the hydrolysis of activated Val-AMP. The other activity is designated 'posttransfer' editing and involves deacylation of mischarged Val-tRNA(Ile).</text>
</comment>
<comment type="catalytic activity">
    <reaction evidence="1">
        <text>tRNA(Ile) + L-isoleucine + ATP = L-isoleucyl-tRNA(Ile) + AMP + diphosphate</text>
        <dbReference type="Rhea" id="RHEA:11060"/>
        <dbReference type="Rhea" id="RHEA-COMP:9666"/>
        <dbReference type="Rhea" id="RHEA-COMP:9695"/>
        <dbReference type="ChEBI" id="CHEBI:30616"/>
        <dbReference type="ChEBI" id="CHEBI:33019"/>
        <dbReference type="ChEBI" id="CHEBI:58045"/>
        <dbReference type="ChEBI" id="CHEBI:78442"/>
        <dbReference type="ChEBI" id="CHEBI:78528"/>
        <dbReference type="ChEBI" id="CHEBI:456215"/>
        <dbReference type="EC" id="6.1.1.5"/>
    </reaction>
</comment>
<comment type="cofactor">
    <cofactor evidence="1">
        <name>Zn(2+)</name>
        <dbReference type="ChEBI" id="CHEBI:29105"/>
    </cofactor>
    <text evidence="1">Binds 1 zinc ion per subunit.</text>
</comment>
<comment type="subunit">
    <text evidence="1">Monomer.</text>
</comment>
<comment type="subcellular location">
    <subcellularLocation>
        <location evidence="1">Cytoplasm</location>
    </subcellularLocation>
</comment>
<comment type="domain">
    <text evidence="1">IleRS has two distinct active sites: one for aminoacylation and one for editing. The misactivated valine is translocated from the active site to the editing site, which sterically excludes the correctly activated isoleucine. The single editing site contains two valyl binding pockets, one specific for each substrate (Val-AMP or Val-tRNA(Ile)).</text>
</comment>
<comment type="similarity">
    <text evidence="1">Belongs to the class-I aminoacyl-tRNA synthetase family. IleS type 1 subfamily.</text>
</comment>
<keyword id="KW-0030">Aminoacyl-tRNA synthetase</keyword>
<keyword id="KW-0067">ATP-binding</keyword>
<keyword id="KW-0963">Cytoplasm</keyword>
<keyword id="KW-0436">Ligase</keyword>
<keyword id="KW-0479">Metal-binding</keyword>
<keyword id="KW-0547">Nucleotide-binding</keyword>
<keyword id="KW-0648">Protein biosynthesis</keyword>
<keyword id="KW-1185">Reference proteome</keyword>
<keyword id="KW-0862">Zinc</keyword>
<reference key="1">
    <citation type="journal article" date="2010" name="Environ. Microbiol.">
        <title>The genome of Syntrophomonas wolfei: new insights into syntrophic metabolism and biohydrogen production.</title>
        <authorList>
            <person name="Sieber J.R."/>
            <person name="Sims D.R."/>
            <person name="Han C."/>
            <person name="Kim E."/>
            <person name="Lykidis A."/>
            <person name="Lapidus A.L."/>
            <person name="McDonnald E."/>
            <person name="Rohlin L."/>
            <person name="Culley D.E."/>
            <person name="Gunsalus R."/>
            <person name="McInerney M.J."/>
        </authorList>
    </citation>
    <scope>NUCLEOTIDE SEQUENCE [LARGE SCALE GENOMIC DNA]</scope>
    <source>
        <strain>DSM 2245B / Goettingen</strain>
    </source>
</reference>
<name>SYI_SYNWW</name>
<feature type="chain" id="PRO_1000022136" description="Isoleucine--tRNA ligase">
    <location>
        <begin position="1"/>
        <end position="927"/>
    </location>
</feature>
<feature type="short sequence motif" description="'HIGH' region">
    <location>
        <begin position="60"/>
        <end position="70"/>
    </location>
</feature>
<feature type="short sequence motif" description="'KMSKS' region">
    <location>
        <begin position="598"/>
        <end position="602"/>
    </location>
</feature>
<feature type="binding site" evidence="1">
    <location>
        <position position="557"/>
    </location>
    <ligand>
        <name>L-isoleucyl-5'-AMP</name>
        <dbReference type="ChEBI" id="CHEBI:178002"/>
    </ligand>
</feature>
<feature type="binding site" evidence="1">
    <location>
        <position position="601"/>
    </location>
    <ligand>
        <name>ATP</name>
        <dbReference type="ChEBI" id="CHEBI:30616"/>
    </ligand>
</feature>
<feature type="binding site" evidence="1">
    <location>
        <position position="895"/>
    </location>
    <ligand>
        <name>Zn(2+)</name>
        <dbReference type="ChEBI" id="CHEBI:29105"/>
    </ligand>
</feature>
<feature type="binding site" evidence="1">
    <location>
        <position position="898"/>
    </location>
    <ligand>
        <name>Zn(2+)</name>
        <dbReference type="ChEBI" id="CHEBI:29105"/>
    </ligand>
</feature>
<feature type="binding site" evidence="1">
    <location>
        <position position="915"/>
    </location>
    <ligand>
        <name>Zn(2+)</name>
        <dbReference type="ChEBI" id="CHEBI:29105"/>
    </ligand>
</feature>
<feature type="binding site" evidence="1">
    <location>
        <position position="918"/>
    </location>
    <ligand>
        <name>Zn(2+)</name>
        <dbReference type="ChEBI" id="CHEBI:29105"/>
    </ligand>
</feature>
<proteinExistence type="inferred from homology"/>
<evidence type="ECO:0000255" key="1">
    <source>
        <dbReference type="HAMAP-Rule" id="MF_02002"/>
    </source>
</evidence>
<accession>Q0AYC7</accession>
<gene>
    <name evidence="1" type="primary">ileS</name>
    <name type="ordered locus">Swol_0962</name>
</gene>